<sequence>MPLLNWSRHMVCLTAAGLITVPTVYATDTLTRDNGAVVGDNQNSQTAGAQGPVLLQDVQLLQKLQRFDRERIPERVVHARGTGVKGEFTASADISDLSKATVFKSGEKTPVFVRFSSVVHGNHSPETLRDPHGFATKFYTADGNWDLVGNNFPTFFIRDAIKFPDMVHAFKPDPRTNLDNDSRRFDFFSHVPEATRTLTLLYSNEGTPAGYRFMDGNGVHAYKLVNAKGEVHYVKFHWKSLQGIKNLDPKEVAQVQSKDYSHLTNDLVGAIKKGDFPKWDLYVQVLKPEELAKFDFDPLDATKIWPDVPEKKIGQMVLNKNVDNFFQETEQVAMAPANLVPGIEPSEDRLLQGRVFSYADTQMYRLGAIGLSLPVNQPKVAVNNGNQDGALNTGHTTSGVNYEPSRLEPRPADDKARYSELPLSGTTQQAKITREQNFKQAGDLFRSYSAKEKTDLVQRFGESLADTHTESKNIMLSVLYKEDRHYGTRVAEVAKGDLSKVKSLAASLKD</sequence>
<proteinExistence type="evidence at protein level"/>
<reference key="1">
    <citation type="journal article" date="1995" name="Appl. Microbiol. Biotechnol.">
        <title>Cloning, characterization and phenotypic expression in Escherichia coli of catF, which encodes the catalytic subunit of catalase isozyme CatF of Pseudomonas syringae.</title>
        <authorList>
            <person name="Klotz M.G."/>
            <person name="Kim Y.C."/>
            <person name="Katsuwon J."/>
            <person name="Anderson A.J."/>
        </authorList>
    </citation>
    <scope>NUCLEOTIDE SEQUENCE [GENOMIC DNA]</scope>
    <source>
        <strain>Pss61</strain>
    </source>
</reference>
<reference key="2">
    <citation type="submission" date="1996-12" db="EMBL/GenBank/DDBJ databases">
        <authorList>
            <person name="Klotz M.G."/>
        </authorList>
    </citation>
    <scope>SEQUENCE REVISION TO C-TERMINUS</scope>
</reference>
<feature type="signal peptide" evidence="2">
    <location>
        <begin position="1"/>
        <end position="26"/>
    </location>
</feature>
<feature type="chain" id="PRO_0000004694" description="Catalase">
    <location>
        <begin position="27"/>
        <end position="510"/>
    </location>
</feature>
<feature type="region of interest" description="Disordered" evidence="4">
    <location>
        <begin position="386"/>
        <end position="412"/>
    </location>
</feature>
<feature type="compositionally biased region" description="Polar residues" evidence="4">
    <location>
        <begin position="386"/>
        <end position="400"/>
    </location>
</feature>
<feature type="active site" evidence="3">
    <location>
        <position position="78"/>
    </location>
</feature>
<feature type="active site" evidence="3">
    <location>
        <position position="150"/>
    </location>
</feature>
<feature type="binding site" description="axial binding residue" evidence="1">
    <location>
        <position position="358"/>
    </location>
    <ligand>
        <name>heme</name>
        <dbReference type="ChEBI" id="CHEBI:30413"/>
    </ligand>
    <ligandPart>
        <name>Fe</name>
        <dbReference type="ChEBI" id="CHEBI:18248"/>
    </ligandPart>
</feature>
<feature type="strand" evidence="6">
    <location>
        <begin position="41"/>
        <end position="43"/>
    </location>
</feature>
<feature type="strand" evidence="6">
    <location>
        <begin position="46"/>
        <end position="48"/>
    </location>
</feature>
<feature type="helix" evidence="6">
    <location>
        <begin position="58"/>
        <end position="67"/>
    </location>
</feature>
<feature type="strand" evidence="6">
    <location>
        <begin position="80"/>
        <end position="90"/>
    </location>
</feature>
<feature type="turn" evidence="6">
    <location>
        <begin position="95"/>
        <end position="97"/>
    </location>
</feature>
<feature type="helix" evidence="6">
    <location>
        <begin position="101"/>
        <end position="103"/>
    </location>
</feature>
<feature type="strand" evidence="6">
    <location>
        <begin position="108"/>
        <end position="116"/>
    </location>
</feature>
<feature type="strand" evidence="6">
    <location>
        <begin position="118"/>
        <end position="120"/>
    </location>
</feature>
<feature type="strand" evidence="6">
    <location>
        <begin position="133"/>
        <end position="140"/>
    </location>
</feature>
<feature type="strand" evidence="6">
    <location>
        <begin position="143"/>
        <end position="154"/>
    </location>
</feature>
<feature type="helix" evidence="6">
    <location>
        <begin position="160"/>
        <end position="162"/>
    </location>
</feature>
<feature type="helix" evidence="6">
    <location>
        <begin position="163"/>
        <end position="170"/>
    </location>
</feature>
<feature type="turn" evidence="6">
    <location>
        <begin position="174"/>
        <end position="176"/>
    </location>
</feature>
<feature type="helix" evidence="6">
    <location>
        <begin position="181"/>
        <end position="189"/>
    </location>
</feature>
<feature type="helix" evidence="6">
    <location>
        <begin position="192"/>
        <end position="194"/>
    </location>
</feature>
<feature type="helix" evidence="6">
    <location>
        <begin position="195"/>
        <end position="202"/>
    </location>
</feature>
<feature type="helix" evidence="6">
    <location>
        <begin position="204"/>
        <end position="206"/>
    </location>
</feature>
<feature type="strand" evidence="6">
    <location>
        <begin position="207"/>
        <end position="209"/>
    </location>
</feature>
<feature type="helix" evidence="6">
    <location>
        <begin position="211"/>
        <end position="213"/>
    </location>
</feature>
<feature type="strand" evidence="6">
    <location>
        <begin position="222"/>
        <end position="225"/>
    </location>
</feature>
<feature type="strand" evidence="6">
    <location>
        <begin position="231"/>
        <end position="240"/>
    </location>
</feature>
<feature type="helix" evidence="6">
    <location>
        <begin position="249"/>
        <end position="258"/>
    </location>
</feature>
<feature type="helix" evidence="6">
    <location>
        <begin position="262"/>
        <end position="272"/>
    </location>
</feature>
<feature type="strand" evidence="6">
    <location>
        <begin position="278"/>
        <end position="286"/>
    </location>
</feature>
<feature type="helix" evidence="6">
    <location>
        <begin position="288"/>
        <end position="293"/>
    </location>
</feature>
<feature type="strand" evidence="6">
    <location>
        <begin position="294"/>
        <end position="296"/>
    </location>
</feature>
<feature type="strand" evidence="6">
    <location>
        <begin position="306"/>
        <end position="308"/>
    </location>
</feature>
<feature type="strand" evidence="6">
    <location>
        <begin position="310"/>
        <end position="321"/>
    </location>
</feature>
<feature type="helix" evidence="6">
    <location>
        <begin position="325"/>
        <end position="328"/>
    </location>
</feature>
<feature type="turn" evidence="6">
    <location>
        <begin position="329"/>
        <end position="331"/>
    </location>
</feature>
<feature type="strand" evidence="6">
    <location>
        <begin position="343"/>
        <end position="345"/>
    </location>
</feature>
<feature type="helix" evidence="6">
    <location>
        <begin position="349"/>
        <end position="365"/>
    </location>
</feature>
<feature type="helix" evidence="6">
    <location>
        <begin position="370"/>
        <end position="372"/>
    </location>
</feature>
<feature type="helix" evidence="6">
    <location>
        <begin position="374"/>
        <end position="376"/>
    </location>
</feature>
<feature type="strand" evidence="6">
    <location>
        <begin position="402"/>
        <end position="404"/>
    </location>
</feature>
<feature type="strand" evidence="6">
    <location>
        <begin position="406"/>
        <end position="408"/>
    </location>
</feature>
<feature type="helix" evidence="6">
    <location>
        <begin position="414"/>
        <end position="416"/>
    </location>
</feature>
<feature type="strand" evidence="6">
    <location>
        <begin position="425"/>
        <end position="428"/>
    </location>
</feature>
<feature type="helix" evidence="6">
    <location>
        <begin position="439"/>
        <end position="447"/>
    </location>
</feature>
<feature type="helix" evidence="6">
    <location>
        <begin position="450"/>
        <end position="464"/>
    </location>
</feature>
<feature type="helix" evidence="6">
    <location>
        <begin position="469"/>
        <end position="482"/>
    </location>
</feature>
<feature type="helix" evidence="6">
    <location>
        <begin position="484"/>
        <end position="493"/>
    </location>
</feature>
<feature type="helix" evidence="6">
    <location>
        <begin position="498"/>
        <end position="506"/>
    </location>
</feature>
<accession>P46206</accession>
<accession>P95545</accession>
<organism>
    <name type="scientific">Pseudomonas syringae pv. syringae</name>
    <dbReference type="NCBI Taxonomy" id="321"/>
    <lineage>
        <taxon>Bacteria</taxon>
        <taxon>Pseudomonadati</taxon>
        <taxon>Pseudomonadota</taxon>
        <taxon>Gammaproteobacteria</taxon>
        <taxon>Pseudomonadales</taxon>
        <taxon>Pseudomonadaceae</taxon>
        <taxon>Pseudomonas</taxon>
        <taxon>Pseudomonas syringae</taxon>
    </lineage>
</organism>
<comment type="function">
    <text>Decomposes hydrogen peroxide into water and oxygen; serves to protect cells from the toxic effects of hydrogen peroxide.</text>
</comment>
<comment type="catalytic activity">
    <reaction evidence="3">
        <text>2 H2O2 = O2 + 2 H2O</text>
        <dbReference type="Rhea" id="RHEA:20309"/>
        <dbReference type="ChEBI" id="CHEBI:15377"/>
        <dbReference type="ChEBI" id="CHEBI:15379"/>
        <dbReference type="ChEBI" id="CHEBI:16240"/>
        <dbReference type="EC" id="1.11.1.6"/>
    </reaction>
</comment>
<comment type="cofactor">
    <cofactor>
        <name>heme</name>
        <dbReference type="ChEBI" id="CHEBI:30413"/>
    </cofactor>
</comment>
<comment type="subcellular location">
    <subcellularLocation>
        <location evidence="5">Periplasm</location>
    </subcellularLocation>
</comment>
<comment type="similarity">
    <text evidence="5">Belongs to the catalase family.</text>
</comment>
<name>CATB_PSESY</name>
<gene>
    <name type="primary">katB</name>
    <name type="synonym">catF</name>
</gene>
<evidence type="ECO:0000250" key="1"/>
<evidence type="ECO:0000255" key="2"/>
<evidence type="ECO:0000255" key="3">
    <source>
        <dbReference type="PROSITE-ProRule" id="PRU10013"/>
    </source>
</evidence>
<evidence type="ECO:0000256" key="4">
    <source>
        <dbReference type="SAM" id="MobiDB-lite"/>
    </source>
</evidence>
<evidence type="ECO:0000305" key="5"/>
<evidence type="ECO:0007829" key="6">
    <source>
        <dbReference type="PDB" id="1M7S"/>
    </source>
</evidence>
<keyword id="KW-0002">3D-structure</keyword>
<keyword id="KW-0349">Heme</keyword>
<keyword id="KW-0376">Hydrogen peroxide</keyword>
<keyword id="KW-0408">Iron</keyword>
<keyword id="KW-0479">Metal-binding</keyword>
<keyword id="KW-0560">Oxidoreductase</keyword>
<keyword id="KW-0574">Periplasm</keyword>
<keyword id="KW-0575">Peroxidase</keyword>
<keyword id="KW-0732">Signal</keyword>
<protein>
    <recommendedName>
        <fullName>Catalase</fullName>
        <ecNumber>1.11.1.6</ecNumber>
    </recommendedName>
</protein>
<dbReference type="EC" id="1.11.1.6"/>
<dbReference type="EMBL" id="AF001355">
    <property type="protein sequence ID" value="AAC61659.1"/>
    <property type="molecule type" value="Genomic_DNA"/>
</dbReference>
<dbReference type="PDB" id="1M7S">
    <property type="method" value="X-ray"/>
    <property type="resolution" value="1.80 A"/>
    <property type="chains" value="A/B/C/D=27-510"/>
</dbReference>
<dbReference type="PDBsum" id="1M7S"/>
<dbReference type="SMR" id="P46206"/>
<dbReference type="SABIO-RK" id="P46206"/>
<dbReference type="EvolutionaryTrace" id="P46206"/>
<dbReference type="GO" id="GO:0005737">
    <property type="term" value="C:cytoplasm"/>
    <property type="evidence" value="ECO:0007669"/>
    <property type="project" value="TreeGrafter"/>
</dbReference>
<dbReference type="GO" id="GO:0042597">
    <property type="term" value="C:periplasmic space"/>
    <property type="evidence" value="ECO:0007669"/>
    <property type="project" value="UniProtKB-SubCell"/>
</dbReference>
<dbReference type="GO" id="GO:0004096">
    <property type="term" value="F:catalase activity"/>
    <property type="evidence" value="ECO:0007669"/>
    <property type="project" value="UniProtKB-EC"/>
</dbReference>
<dbReference type="GO" id="GO:0020037">
    <property type="term" value="F:heme binding"/>
    <property type="evidence" value="ECO:0007669"/>
    <property type="project" value="InterPro"/>
</dbReference>
<dbReference type="GO" id="GO:0046872">
    <property type="term" value="F:metal ion binding"/>
    <property type="evidence" value="ECO:0007669"/>
    <property type="project" value="UniProtKB-KW"/>
</dbReference>
<dbReference type="GO" id="GO:0042744">
    <property type="term" value="P:hydrogen peroxide catabolic process"/>
    <property type="evidence" value="ECO:0007669"/>
    <property type="project" value="UniProtKB-KW"/>
</dbReference>
<dbReference type="GO" id="GO:0042542">
    <property type="term" value="P:response to hydrogen peroxide"/>
    <property type="evidence" value="ECO:0007669"/>
    <property type="project" value="TreeGrafter"/>
</dbReference>
<dbReference type="CDD" id="cd08154">
    <property type="entry name" value="catalase_clade_1"/>
    <property type="match status" value="1"/>
</dbReference>
<dbReference type="FunFam" id="2.40.180.10:FF:000002">
    <property type="entry name" value="Catalase"/>
    <property type="match status" value="1"/>
</dbReference>
<dbReference type="Gene3D" id="2.40.180.10">
    <property type="entry name" value="Catalase core domain"/>
    <property type="match status" value="1"/>
</dbReference>
<dbReference type="InterPro" id="IPR018028">
    <property type="entry name" value="Catalase"/>
</dbReference>
<dbReference type="InterPro" id="IPR024708">
    <property type="entry name" value="Catalase_AS"/>
</dbReference>
<dbReference type="InterPro" id="IPR024711">
    <property type="entry name" value="Catalase_clade1/3"/>
</dbReference>
<dbReference type="InterPro" id="IPR011614">
    <property type="entry name" value="Catalase_core"/>
</dbReference>
<dbReference type="InterPro" id="IPR002226">
    <property type="entry name" value="Catalase_haem_BS"/>
</dbReference>
<dbReference type="InterPro" id="IPR010582">
    <property type="entry name" value="Catalase_immune_responsive"/>
</dbReference>
<dbReference type="InterPro" id="IPR020835">
    <property type="entry name" value="Catalase_sf"/>
</dbReference>
<dbReference type="PANTHER" id="PTHR11465">
    <property type="entry name" value="CATALASE"/>
    <property type="match status" value="1"/>
</dbReference>
<dbReference type="PANTHER" id="PTHR11465:SF23">
    <property type="entry name" value="CATALASE-2"/>
    <property type="match status" value="1"/>
</dbReference>
<dbReference type="Pfam" id="PF00199">
    <property type="entry name" value="Catalase"/>
    <property type="match status" value="1"/>
</dbReference>
<dbReference type="Pfam" id="PF06628">
    <property type="entry name" value="Catalase-rel"/>
    <property type="match status" value="1"/>
</dbReference>
<dbReference type="PIRSF" id="PIRSF038928">
    <property type="entry name" value="Catalase_clade1-3"/>
    <property type="match status" value="1"/>
</dbReference>
<dbReference type="PRINTS" id="PR00067">
    <property type="entry name" value="CATALASE"/>
</dbReference>
<dbReference type="SMART" id="SM01060">
    <property type="entry name" value="Catalase"/>
    <property type="match status" value="1"/>
</dbReference>
<dbReference type="SUPFAM" id="SSF56634">
    <property type="entry name" value="Heme-dependent catalase-like"/>
    <property type="match status" value="1"/>
</dbReference>
<dbReference type="PROSITE" id="PS00437">
    <property type="entry name" value="CATALASE_1"/>
    <property type="match status" value="1"/>
</dbReference>
<dbReference type="PROSITE" id="PS00438">
    <property type="entry name" value="CATALASE_2"/>
    <property type="match status" value="1"/>
</dbReference>
<dbReference type="PROSITE" id="PS51402">
    <property type="entry name" value="CATALASE_3"/>
    <property type="match status" value="1"/>
</dbReference>